<protein>
    <recommendedName>
        <fullName evidence="2">Poly(A) RNA polymerase GLD2</fullName>
        <ecNumber>2.7.7.19</ecNumber>
    </recommendedName>
    <alternativeName>
        <fullName>PAP-associated domain-containing protein 4</fullName>
    </alternativeName>
</protein>
<proteinExistence type="evidence at transcript level"/>
<organism>
    <name type="scientific">Danio rerio</name>
    <name type="common">Zebrafish</name>
    <name type="synonym">Brachydanio rerio</name>
    <dbReference type="NCBI Taxonomy" id="7955"/>
    <lineage>
        <taxon>Eukaryota</taxon>
        <taxon>Metazoa</taxon>
        <taxon>Chordata</taxon>
        <taxon>Craniata</taxon>
        <taxon>Vertebrata</taxon>
        <taxon>Euteleostomi</taxon>
        <taxon>Actinopterygii</taxon>
        <taxon>Neopterygii</taxon>
        <taxon>Teleostei</taxon>
        <taxon>Ostariophysi</taxon>
        <taxon>Cypriniformes</taxon>
        <taxon>Danionidae</taxon>
        <taxon>Danioninae</taxon>
        <taxon>Danio</taxon>
    </lineage>
</organism>
<gene>
    <name evidence="2" type="primary">tent2</name>
    <name evidence="2" type="synonym">papd4</name>
    <name type="ORF">zgc:110560</name>
</gene>
<name>GLD2_DANRE</name>
<accession>Q503I9</accession>
<evidence type="ECO:0000250" key="1"/>
<evidence type="ECO:0000250" key="2">
    <source>
        <dbReference type="UniProtKB" id="Q6PIY7"/>
    </source>
</evidence>
<evidence type="ECO:0000256" key="3">
    <source>
        <dbReference type="SAM" id="MobiDB-lite"/>
    </source>
</evidence>
<evidence type="ECO:0000305" key="4"/>
<dbReference type="EC" id="2.7.7.19"/>
<dbReference type="EMBL" id="BC095312">
    <property type="protein sequence ID" value="AAH95312.1"/>
    <property type="molecule type" value="mRNA"/>
</dbReference>
<dbReference type="RefSeq" id="NP_001018436.1">
    <property type="nucleotide sequence ID" value="NM_001020600.1"/>
</dbReference>
<dbReference type="SMR" id="Q503I9"/>
<dbReference type="FunCoup" id="Q503I9">
    <property type="interactions" value="794"/>
</dbReference>
<dbReference type="STRING" id="7955.ENSDARP00000138757"/>
<dbReference type="PaxDb" id="7955-ENSDARP00000096574"/>
<dbReference type="GeneID" id="553626"/>
<dbReference type="KEGG" id="dre:553626"/>
<dbReference type="AGR" id="ZFIN:ZDB-GENE-050522-536"/>
<dbReference type="CTD" id="167153"/>
<dbReference type="ZFIN" id="ZDB-GENE-050522-536">
    <property type="gene designation" value="tent2"/>
</dbReference>
<dbReference type="eggNOG" id="KOG2277">
    <property type="taxonomic scope" value="Eukaryota"/>
</dbReference>
<dbReference type="InParanoid" id="Q503I9"/>
<dbReference type="OrthoDB" id="2274644at2759"/>
<dbReference type="PhylomeDB" id="Q503I9"/>
<dbReference type="PRO" id="PR:Q503I9"/>
<dbReference type="Proteomes" id="UP000000437">
    <property type="component" value="Chromosome 5"/>
</dbReference>
<dbReference type="GO" id="GO:0005737">
    <property type="term" value="C:cytoplasm"/>
    <property type="evidence" value="ECO:0007669"/>
    <property type="project" value="UniProtKB-SubCell"/>
</dbReference>
<dbReference type="GO" id="GO:0005524">
    <property type="term" value="F:ATP binding"/>
    <property type="evidence" value="ECO:0007669"/>
    <property type="project" value="UniProtKB-KW"/>
</dbReference>
<dbReference type="GO" id="GO:0046872">
    <property type="term" value="F:metal ion binding"/>
    <property type="evidence" value="ECO:0007669"/>
    <property type="project" value="UniProtKB-KW"/>
</dbReference>
<dbReference type="GO" id="GO:1990817">
    <property type="term" value="F:poly(A) RNA polymerase activity"/>
    <property type="evidence" value="ECO:0000250"/>
    <property type="project" value="UniProtKB"/>
</dbReference>
<dbReference type="GO" id="GO:0031124">
    <property type="term" value="P:mRNA 3'-end processing"/>
    <property type="evidence" value="ECO:0000250"/>
    <property type="project" value="UniProtKB"/>
</dbReference>
<dbReference type="GO" id="GO:2000626">
    <property type="term" value="P:negative regulation of miRNA catabolic process"/>
    <property type="evidence" value="ECO:0000250"/>
    <property type="project" value="UniProtKB"/>
</dbReference>
<dbReference type="GO" id="GO:0031123">
    <property type="term" value="P:RNA 3'-end processing"/>
    <property type="evidence" value="ECO:0000318"/>
    <property type="project" value="GO_Central"/>
</dbReference>
<dbReference type="CDD" id="cd05402">
    <property type="entry name" value="NT_PAP_TUTase"/>
    <property type="match status" value="1"/>
</dbReference>
<dbReference type="FunFam" id="1.10.1410.10:FF:000007">
    <property type="entry name" value="poly(A) RNA polymerase GLD2 isoform X1"/>
    <property type="match status" value="1"/>
</dbReference>
<dbReference type="FunFam" id="3.30.460.10:FF:000022">
    <property type="entry name" value="poly(A) RNA polymerase GLD2 isoform X1"/>
    <property type="match status" value="1"/>
</dbReference>
<dbReference type="Gene3D" id="1.10.1410.10">
    <property type="match status" value="1"/>
</dbReference>
<dbReference type="Gene3D" id="3.30.460.10">
    <property type="entry name" value="Beta Polymerase, domain 2"/>
    <property type="match status" value="1"/>
</dbReference>
<dbReference type="InterPro" id="IPR054708">
    <property type="entry name" value="MTPAP-like_central"/>
</dbReference>
<dbReference type="InterPro" id="IPR043519">
    <property type="entry name" value="NT_sf"/>
</dbReference>
<dbReference type="InterPro" id="IPR002058">
    <property type="entry name" value="PAP_assoc"/>
</dbReference>
<dbReference type="PANTHER" id="PTHR12271">
    <property type="entry name" value="POLY A POLYMERASE CID PAP -RELATED"/>
    <property type="match status" value="1"/>
</dbReference>
<dbReference type="PANTHER" id="PTHR12271:SF40">
    <property type="entry name" value="POLY(A) RNA POLYMERASE GLD2"/>
    <property type="match status" value="1"/>
</dbReference>
<dbReference type="Pfam" id="PF22600">
    <property type="entry name" value="MTPAP-like_central"/>
    <property type="match status" value="1"/>
</dbReference>
<dbReference type="Pfam" id="PF03828">
    <property type="entry name" value="PAP_assoc"/>
    <property type="match status" value="1"/>
</dbReference>
<dbReference type="SUPFAM" id="SSF81301">
    <property type="entry name" value="Nucleotidyltransferase"/>
    <property type="match status" value="1"/>
</dbReference>
<dbReference type="SUPFAM" id="SSF81631">
    <property type="entry name" value="PAP/OAS1 substrate-binding domain"/>
    <property type="match status" value="1"/>
</dbReference>
<sequence>MLPRPYIFSHNDGPSSHLFQHVLPHNVSQQQRIEAHLNSTNNFIGPPMNAPRFIPTYQWTPVELSDVACSPNGPMGNNRKRRIQDNSDINLKRQRFSCPSPHNQSARNSNFTSQPVTRPVTGREVTCPTCSSATFIPGGCVPSLGETCHQNAFSPSSVKDKLSQQILNLFFACEQQSDDLEKKESCRAALQTDIQKIFPCAKVFLGGSSLNGFGSRSSDADLCLVIEEGPVNHRKDAVYVLSLVRKLLYKLSYIEKPQLIRAKVPIVKFRDRISGVEFDLNFNNTVGIRNTFLLRTYAFVEKRVRPLVLVIKKWANHHCINDASRGTLSSYTLVLMVLHYLQTLPEPVIPCLQRDYPTCFDPKMDIHLVPSGPSDIPAFVSRNQSSLGDLFLGFLRYYATVFKWDKQVISVRMARTLPKSNCKEWKDKFICVEEPFNRTNTARAVHERMKFEAIKAAFIESHRLLQLRKDLNFILPKSKQMARPQTAPR</sequence>
<reference key="1">
    <citation type="submission" date="2005-05" db="EMBL/GenBank/DDBJ databases">
        <authorList>
            <consortium name="NIH - Zebrafish Gene Collection (ZGC) project"/>
        </authorList>
    </citation>
    <scope>NUCLEOTIDE SEQUENCE [LARGE SCALE MRNA]</scope>
    <source>
        <tissue>Embryo</tissue>
    </source>
</reference>
<comment type="function">
    <text evidence="1">Cytoplasmic poly(A) RNA polymerase that adds successive AMP monomers to the 3'-end of specific RNAs, forming a poly(A) tail. In contrast to the canonical nuclear poly(A) RNA polymerase, it only adds poly(A) to selected cytoplasmic mRNAs. May not play a role in replication-dependent histone mRNA degradation (By similarity).</text>
</comment>
<comment type="catalytic activity">
    <reaction>
        <text>RNA(n) + ATP = RNA(n)-3'-adenine ribonucleotide + diphosphate</text>
        <dbReference type="Rhea" id="RHEA:11332"/>
        <dbReference type="Rhea" id="RHEA-COMP:14527"/>
        <dbReference type="Rhea" id="RHEA-COMP:17347"/>
        <dbReference type="ChEBI" id="CHEBI:30616"/>
        <dbReference type="ChEBI" id="CHEBI:33019"/>
        <dbReference type="ChEBI" id="CHEBI:140395"/>
        <dbReference type="ChEBI" id="CHEBI:173115"/>
        <dbReference type="EC" id="2.7.7.19"/>
    </reaction>
</comment>
<comment type="cofactor">
    <cofactor evidence="1">
        <name>Mg(2+)</name>
        <dbReference type="ChEBI" id="CHEBI:18420"/>
    </cofactor>
    <cofactor evidence="1">
        <name>Mn(2+)</name>
        <dbReference type="ChEBI" id="CHEBI:29035"/>
    </cofactor>
</comment>
<comment type="subcellular location">
    <subcellularLocation>
        <location evidence="1">Cytoplasm</location>
    </subcellularLocation>
</comment>
<comment type="similarity">
    <text evidence="4">Belongs to the DNA polymerase type-B-like family. GLD2 subfamily.</text>
</comment>
<feature type="chain" id="PRO_0000341552" description="Poly(A) RNA polymerase GLD2">
    <location>
        <begin position="1"/>
        <end position="489"/>
    </location>
</feature>
<feature type="domain" description="PAP-associated">
    <location>
        <begin position="386"/>
        <end position="440"/>
    </location>
</feature>
<feature type="region of interest" description="Disordered" evidence="3">
    <location>
        <begin position="93"/>
        <end position="118"/>
    </location>
</feature>
<feature type="compositionally biased region" description="Polar residues" evidence="3">
    <location>
        <begin position="100"/>
        <end position="116"/>
    </location>
</feature>
<feature type="binding site" evidence="1">
    <location>
        <position position="219"/>
    </location>
    <ligand>
        <name>Mg(2+)</name>
        <dbReference type="ChEBI" id="CHEBI:18420"/>
        <note>catalytic</note>
    </ligand>
</feature>
<feature type="binding site" evidence="1">
    <location>
        <position position="221"/>
    </location>
    <ligand>
        <name>Mg(2+)</name>
        <dbReference type="ChEBI" id="CHEBI:18420"/>
        <note>catalytic</note>
    </ligand>
</feature>
<keyword id="KW-0067">ATP-binding</keyword>
<keyword id="KW-0963">Cytoplasm</keyword>
<keyword id="KW-0460">Magnesium</keyword>
<keyword id="KW-0464">Manganese</keyword>
<keyword id="KW-0479">Metal-binding</keyword>
<keyword id="KW-0507">mRNA processing</keyword>
<keyword id="KW-0547">Nucleotide-binding</keyword>
<keyword id="KW-1185">Reference proteome</keyword>
<keyword id="KW-0808">Transferase</keyword>